<sequence length="277" mass="31895">MKTLKVVATPIGNIQEISERAKKALQDCEVLFCEDSRVTRKMLDLLNIDCKQKKFVINNSFKEKQNLTFAEEFITNFKCCLVSDAGYPSLSDPGNEMINWIISKNKEIRIEVINGPSALMCGLITSGFKTTPLLFLGFLSHKQNQLKNYLSTYQNQKSTIVFFEAVHRLENTLETVKNVFKNNDVFIGRELTKLHESHYWFNTSENTLPDITLKGEFVIVIDNQNINHQTLSSNQYLVYEIKKLMDIGVKLKDACNYLAKKMHLKSSMLYTLFHESI</sequence>
<keyword id="KW-0963">Cytoplasm</keyword>
<keyword id="KW-0489">Methyltransferase</keyword>
<keyword id="KW-1185">Reference proteome</keyword>
<keyword id="KW-0698">rRNA processing</keyword>
<keyword id="KW-0949">S-adenosyl-L-methionine</keyword>
<keyword id="KW-0808">Transferase</keyword>
<comment type="function">
    <text evidence="1">Catalyzes the 2'-O-methylation of the ribose of cytidine 1402 (C1402) in 16S rRNA.</text>
</comment>
<comment type="catalytic activity">
    <reaction evidence="1">
        <text>cytidine(1402) in 16S rRNA + S-adenosyl-L-methionine = 2'-O-methylcytidine(1402) in 16S rRNA + S-adenosyl-L-homocysteine + H(+)</text>
        <dbReference type="Rhea" id="RHEA:42924"/>
        <dbReference type="Rhea" id="RHEA-COMP:10285"/>
        <dbReference type="Rhea" id="RHEA-COMP:10286"/>
        <dbReference type="ChEBI" id="CHEBI:15378"/>
        <dbReference type="ChEBI" id="CHEBI:57856"/>
        <dbReference type="ChEBI" id="CHEBI:59789"/>
        <dbReference type="ChEBI" id="CHEBI:74495"/>
        <dbReference type="ChEBI" id="CHEBI:82748"/>
        <dbReference type="EC" id="2.1.1.198"/>
    </reaction>
</comment>
<comment type="subcellular location">
    <subcellularLocation>
        <location evidence="1">Cytoplasm</location>
    </subcellularLocation>
</comment>
<comment type="similarity">
    <text evidence="1">Belongs to the methyltransferase superfamily. RsmI family.</text>
</comment>
<reference key="1">
    <citation type="journal article" date="1995" name="Science">
        <title>The minimal gene complement of Mycoplasma genitalium.</title>
        <authorList>
            <person name="Fraser C.M."/>
            <person name="Gocayne J.D."/>
            <person name="White O."/>
            <person name="Adams M.D."/>
            <person name="Clayton R.A."/>
            <person name="Fleischmann R.D."/>
            <person name="Bult C.J."/>
            <person name="Kerlavage A.R."/>
            <person name="Sutton G.G."/>
            <person name="Kelley J.M."/>
            <person name="Fritchman J.L."/>
            <person name="Weidman J.F."/>
            <person name="Small K.V."/>
            <person name="Sandusky M."/>
            <person name="Fuhrmann J.L."/>
            <person name="Nguyen D.T."/>
            <person name="Utterback T.R."/>
            <person name="Saudek D.M."/>
            <person name="Phillips C.A."/>
            <person name="Merrick J.M."/>
            <person name="Tomb J.-F."/>
            <person name="Dougherty B.A."/>
            <person name="Bott K.F."/>
            <person name="Hu P.-C."/>
            <person name="Lucier T.S."/>
            <person name="Peterson S.N."/>
            <person name="Smith H.O."/>
            <person name="Hutchison C.A. III"/>
            <person name="Venter J.C."/>
        </authorList>
    </citation>
    <scope>NUCLEOTIDE SEQUENCE [LARGE SCALE GENOMIC DNA]</scope>
    <source>
        <strain>ATCC 33530 / DSM 19775 / NCTC 10195 / G37</strain>
    </source>
</reference>
<protein>
    <recommendedName>
        <fullName evidence="1">Ribosomal RNA small subunit methyltransferase I</fullName>
        <ecNumber evidence="1">2.1.1.198</ecNumber>
    </recommendedName>
    <alternativeName>
        <fullName evidence="1">16S rRNA 2'-O-ribose C1402 methyltransferase</fullName>
    </alternativeName>
    <alternativeName>
        <fullName evidence="1">rRNA (cytidine-2'-O-)-methyltransferase RsmI</fullName>
    </alternativeName>
</protein>
<organism>
    <name type="scientific">Mycoplasma genitalium (strain ATCC 33530 / DSM 19775 / NCTC 10195 / G37)</name>
    <name type="common">Mycoplasmoides genitalium</name>
    <dbReference type="NCBI Taxonomy" id="243273"/>
    <lineage>
        <taxon>Bacteria</taxon>
        <taxon>Bacillati</taxon>
        <taxon>Mycoplasmatota</taxon>
        <taxon>Mycoplasmoidales</taxon>
        <taxon>Mycoplasmoidaceae</taxon>
        <taxon>Mycoplasmoides</taxon>
    </lineage>
</organism>
<feature type="chain" id="PRO_0000211943" description="Ribosomal RNA small subunit methyltransferase I">
    <location>
        <begin position="1"/>
        <end position="277"/>
    </location>
</feature>
<dbReference type="EC" id="2.1.1.198" evidence="1"/>
<dbReference type="EMBL" id="L43967">
    <property type="protein sequence ID" value="AAC71273.1"/>
    <property type="molecule type" value="Genomic_DNA"/>
</dbReference>
<dbReference type="PIR" id="B64206">
    <property type="entry name" value="B64206"/>
</dbReference>
<dbReference type="RefSeq" id="WP_009885721.1">
    <property type="nucleotide sequence ID" value="NC_000908.2"/>
</dbReference>
<dbReference type="SMR" id="P47302"/>
<dbReference type="FunCoup" id="P47302">
    <property type="interactions" value="129"/>
</dbReference>
<dbReference type="STRING" id="243273.MG_056"/>
<dbReference type="GeneID" id="88282173"/>
<dbReference type="KEGG" id="mge:MG_056"/>
<dbReference type="eggNOG" id="COG0313">
    <property type="taxonomic scope" value="Bacteria"/>
</dbReference>
<dbReference type="HOGENOM" id="CLU_044779_4_0_14"/>
<dbReference type="InParanoid" id="P47302"/>
<dbReference type="OrthoDB" id="9809084at2"/>
<dbReference type="BioCyc" id="MGEN243273:G1GJ2-59-MONOMER"/>
<dbReference type="Proteomes" id="UP000000807">
    <property type="component" value="Chromosome"/>
</dbReference>
<dbReference type="GO" id="GO:0005737">
    <property type="term" value="C:cytoplasm"/>
    <property type="evidence" value="ECO:0007669"/>
    <property type="project" value="UniProtKB-SubCell"/>
</dbReference>
<dbReference type="GO" id="GO:0070677">
    <property type="term" value="F:rRNA (cytosine-2'-O-)-methyltransferase activity"/>
    <property type="evidence" value="ECO:0007669"/>
    <property type="project" value="UniProtKB-UniRule"/>
</dbReference>
<dbReference type="CDD" id="cd11648">
    <property type="entry name" value="RsmI"/>
    <property type="match status" value="1"/>
</dbReference>
<dbReference type="FunFam" id="3.40.1010.10:FF:000007">
    <property type="entry name" value="Ribosomal RNA small subunit methyltransferase I"/>
    <property type="match status" value="1"/>
</dbReference>
<dbReference type="Gene3D" id="3.40.1010.10">
    <property type="entry name" value="Cobalt-precorrin-4 Transmethylase, Domain 1"/>
    <property type="match status" value="1"/>
</dbReference>
<dbReference type="Gene3D" id="3.30.950.10">
    <property type="entry name" value="Methyltransferase, Cobalt-precorrin-4 Transmethylase, Domain 2"/>
    <property type="match status" value="1"/>
</dbReference>
<dbReference type="HAMAP" id="MF_01877">
    <property type="entry name" value="16SrRNA_methyltr_I"/>
    <property type="match status" value="1"/>
</dbReference>
<dbReference type="InterPro" id="IPR000878">
    <property type="entry name" value="4pyrrol_Mease"/>
</dbReference>
<dbReference type="InterPro" id="IPR035996">
    <property type="entry name" value="4pyrrol_Methylase_sf"/>
</dbReference>
<dbReference type="InterPro" id="IPR014777">
    <property type="entry name" value="4pyrrole_Mease_sub1"/>
</dbReference>
<dbReference type="InterPro" id="IPR014776">
    <property type="entry name" value="4pyrrole_Mease_sub2"/>
</dbReference>
<dbReference type="InterPro" id="IPR008189">
    <property type="entry name" value="rRNA_ssu_MeTfrase_I"/>
</dbReference>
<dbReference type="InterPro" id="IPR018063">
    <property type="entry name" value="SAM_MeTrfase_RsmI_CS"/>
</dbReference>
<dbReference type="NCBIfam" id="TIGR00096">
    <property type="entry name" value="16S rRNA (cytidine(1402)-2'-O)-methyltransferase"/>
    <property type="match status" value="1"/>
</dbReference>
<dbReference type="PANTHER" id="PTHR46111">
    <property type="entry name" value="RIBOSOMAL RNA SMALL SUBUNIT METHYLTRANSFERASE I"/>
    <property type="match status" value="1"/>
</dbReference>
<dbReference type="PANTHER" id="PTHR46111:SF1">
    <property type="entry name" value="RIBOSOMAL RNA SMALL SUBUNIT METHYLTRANSFERASE I"/>
    <property type="match status" value="1"/>
</dbReference>
<dbReference type="Pfam" id="PF00590">
    <property type="entry name" value="TP_methylase"/>
    <property type="match status" value="1"/>
</dbReference>
<dbReference type="PIRSF" id="PIRSF005917">
    <property type="entry name" value="MTase_YraL"/>
    <property type="match status" value="1"/>
</dbReference>
<dbReference type="SUPFAM" id="SSF53790">
    <property type="entry name" value="Tetrapyrrole methylase"/>
    <property type="match status" value="1"/>
</dbReference>
<dbReference type="PROSITE" id="PS01296">
    <property type="entry name" value="RSMI"/>
    <property type="match status" value="1"/>
</dbReference>
<gene>
    <name evidence="1" type="primary">rsmI</name>
    <name type="ordered locus">MG056</name>
</gene>
<evidence type="ECO:0000255" key="1">
    <source>
        <dbReference type="HAMAP-Rule" id="MF_01877"/>
    </source>
</evidence>
<accession>P47302</accession>
<proteinExistence type="inferred from homology"/>
<name>RSMI_MYCGE</name>